<comment type="function">
    <text evidence="1 3 6 8 9 11 14 18 24 26 27 28 29 31 32 34 35 36">Heparin-dependent serine protease inhibitor acting in body fluids and secretions. Inactivates serine proteases by binding irreversibly to their serine activation site. Involved in the regulation of intravascular and extravascular proteolytic activities. Plays hemostatic roles in the blood plasma. Acts as a procoagulant and pro-inflammatory factor by inhibiting the anticoagulant activated protein C factor as well as the generation of activated protein C factor by the thrombin/thrombomodulin complex. Acts as an anticoagulant factor by inhibiting blood coagulation factors like prothrombin, factor XI, factor Xa, plasma kallikrein and fibrinolytic enzymes such as tissue- and urinary-type plasminogen activators. In seminal plasma, inactivates several serine proteases implicated in the reproductive system. Inhibits the serpin acrosin; indirectly protects component of the male genital tract from being degraded by excessive released acrosin. Inhibits tissue- and urinary-type plasminogen activator, prostate-specific antigen and kallikrein activities; has a control on the sperm motility and fertilization. Inhibits the activated protein C-catalyzed degradation of SEMG1 and SEMG2; regulates the degradation of semenogelin during the process of transfer of spermatozoa from the male reproductive tract into the female tract. In urine, inhibits urinary-type plasminogen activator and kallikrein activities. Inactivates membrane-anchored serine proteases activities such as MPRSS7 and TMPRSS11E. Inhibits urinary-type plasminogen activator-dependent tumor cell invasion and metastasis. May also play a non-inhibitory role in seminal plasma and urine as a hydrophobic hormone carrier by its binding to retinoic acid.</text>
</comment>
<comment type="activity regulation">
    <text>Its inhibitory activity is greatly enhanced in the presence of glycosaminoglycans, heparin, thrombomodulin and phospholipids vesicles.</text>
</comment>
<comment type="subunit">
    <text evidence="19 32">Forms protease inhibiting heterodimers in extracellular body fluids with serine proteases such as activated protein C/coagulation factor V/F5, acrosin/ACR, chymotrypsinogen B/CTRB1, prothrombin/F2, factor Xa/F10, factor XI/F11, kallikrein/KLKB1, tissue kallikrein, trypsin/PRSS1, prostate specific antigen/KLK3, tissue plasminogen activator/PLAT and urinary plasminogen activator/PLAU. Forms membrane-anchored serine proteases inhibiting heterodimers with TMPRSS7 and TMPRSS11E. Interacts with SEMG2.</text>
</comment>
<comment type="interaction">
    <interactant intactId="EBI-722597">
        <id>P05154</id>
    </interactant>
    <interactant intactId="EBI-1220319">
        <id>P02751</id>
        <label>FN1</label>
    </interactant>
    <organismsDiffer>false</organismsDiffer>
    <experiments>3</experiments>
</comment>
<comment type="subcellular location">
    <subcellularLocation>
        <location evidence="14 18 28 31 35 36">Secreted</location>
        <location evidence="14 18 28 31 35 36">Extracellular space</location>
    </subcellularLocation>
    <text>Localized on the plasma membrane overlying the acrosomal head of spermatozoa of ependymal spermatozoa and ejaculated sperm. Localized at the equatorial segment of acrosome-reacted spermatozoa. Localized in alpha granules in resting platelets and on the external plasma membrane and within the surface-connected cannalicular system in activated platelets.</text>
</comment>
<comment type="tissue specificity">
    <text evidence="5 6 8 15 18 35 36">Predominantly expressed in the epithelium of seminal vesicles. Expressed in the proximal tubular epithelium of the kidney. Expressed in the superficial and more differentiated epidermal keratinocytes of the skin. Expressed in megakaryocytes and platelets. Expressed poorly in kidney tumor cells compared to non tumor kidney tissues. Expressed in spermatozoa. Present in very high concentration in seminal plasma. Present in high concentration in plasma, synovial and Graaf follicle fluids. Present in low concentration in breast milk and in amniotic fluids. Present in very low concentration in urine, cerebrospinal fluids, saliva and tears (at protein level). Strongly expressed in liver. Expressed in kidney, spleen, pancreas, skeletal muscle, heart, testes, ovary, interstitial Leydig cells, epididymal glands, seminal vesicles and prostate.</text>
</comment>
<comment type="domain">
    <text>The reactive center loop (RCL) extends out from the body of the protein and directs binding to the target protease. The protease cleaves the serpin at the reactive site within the RCL, establishing a covalent linkage between the carboxyl group of the serpin reactive site and the serine hydroxyl of the protease. The resulting inactive serpin-protease complex is highly stable.</text>
</comment>
<comment type="PTM">
    <text evidence="4 7 12 18 20 22">N- and O-glycosylated. N-glycosylation consists of a mixture of sialylated bi- (including sialyl-Lewis X epitopes), tri- and tetra-antennary complex-type chains; affects the maximal heparin- and thrombomodulin-enhanced rates of thrombin inhibition. O-glycosylated with core 1 or possibly core 8 glycans. Further modified with 2 sialic acid residues.</text>
</comment>
<comment type="PTM">
    <text evidence="9 18">Proteolytically cleaved. Inhibition of proteases is accompanied by formation of a stable enzyme-inhibitor complex and by degradation of the serpin to lower molecular weight derivatives. Proteolytically cleaved at the N-terminus; inhibits slightly the heparin- and thrombomodulin-enhanced rates of thrombin inhibition.</text>
</comment>
<comment type="similarity">
    <text evidence="38">Belongs to the serpin family.</text>
</comment>
<accession>P05154</accession>
<accession>Q07616</accession>
<accession>Q9UG30</accession>
<name>IPSP_HUMAN</name>
<feature type="signal peptide" evidence="23">
    <location>
        <begin position="1"/>
        <end position="19"/>
    </location>
</feature>
<feature type="propeptide" id="PRO_0000414091" description="Removed in mature form">
    <location>
        <begin position="20"/>
        <end position="25"/>
    </location>
</feature>
<feature type="chain" id="PRO_0000032427" description="Plasma serine protease inhibitor">
    <location>
        <begin position="26"/>
        <end position="406"/>
    </location>
</feature>
<feature type="site" description="Reactive bond">
    <location>
        <begin position="373"/>
        <end position="374"/>
    </location>
</feature>
<feature type="glycosylation site" description="O-linked (GalNAc...) threonine" evidence="20 22">
    <location>
        <position position="39"/>
    </location>
</feature>
<feature type="glycosylation site" description="N-linked (GlcNAc...) asparagine" evidence="7 18">
    <location>
        <position position="249"/>
    </location>
</feature>
<feature type="glycosylation site" description="N-linked (GlcNAc...) asparagine" evidence="4 12 18">
    <location>
        <position position="262"/>
    </location>
</feature>
<feature type="glycosylation site" description="N-linked (GlcNAc...) asparagine" evidence="12 18">
    <location>
        <position position="338"/>
    </location>
</feature>
<feature type="sequence variant" id="VAR_013080" description="In dbSNP:rs2069975." evidence="37">
    <original>S</original>
    <variation>G</variation>
    <location>
        <position position="44"/>
    </location>
</feature>
<feature type="sequence variant" id="VAR_007100" description="In allele PCI*B; dbSNP:rs6118." evidence="2 33 37">
    <original>A</original>
    <variation>V</variation>
    <location>
        <position position="55"/>
    </location>
</feature>
<feature type="sequence variant" id="VAR_013081" description="In dbSNP:rs6115." evidence="2 10 13 16 21 25 30 33 37">
    <original>S</original>
    <variation>N</variation>
    <location>
        <position position="64"/>
    </location>
</feature>
<feature type="sequence variant" id="VAR_013082" description="In dbSNP:rs2069976." evidence="37">
    <original>G</original>
    <variation>V</variation>
    <location>
        <position position="94"/>
    </location>
</feature>
<feature type="sequence variant" id="VAR_007101" description="In allele PCI*B; dbSNP:rs6119." evidence="2 33 37">
    <original>K</original>
    <variation>E</variation>
    <location>
        <position position="105"/>
    </location>
</feature>
<feature type="sequence variant" id="VAR_013083" description="In dbSNP:rs2069999." evidence="37">
    <original>L</original>
    <variation>P</variation>
    <location>
        <position position="115"/>
    </location>
</feature>
<feature type="sequence variant" id="VAR_013900" description="In dbSNP:rs6120." evidence="2">
    <original>P</original>
    <variation>A</variation>
    <location>
        <position position="121"/>
    </location>
</feature>
<feature type="sequence variant" id="VAR_013084" description="In dbSNP:rs6114." evidence="2 37">
    <original>G</original>
    <variation>R</variation>
    <location>
        <position position="217"/>
    </location>
</feature>
<feature type="mutagenesis site" description="Does not change the rate of thrombin or activated protein C/F5 inhibition in the presence or absence of heparin. Strongly reduces the rate of thrombin inhibition in the presence of heparin." evidence="19">
    <original>R</original>
    <variation>E</variation>
    <location>
        <position position="248"/>
    </location>
</feature>
<feature type="mutagenesis site" description="Inhibits strongly thrombomodulin-enhanced rate of thrombin inhibition in presence of heparin." evidence="17">
    <original>R</original>
    <variation>E</variation>
    <location>
        <position position="253"/>
    </location>
</feature>
<feature type="mutagenesis site" description="Does not inhibit thrombomodulin-enhanced rate of thrombin inhibition in presence of heparin." evidence="17">
    <original>E</original>
    <variation>K</variation>
    <location>
        <position position="272"/>
    </location>
</feature>
<feature type="mutagenesis site" description="Does not inhibit thrombomodulin-enhanced rate of thrombin inhibition in presence of heparin." evidence="17">
    <original>K</original>
    <variation>E</variation>
    <location>
        <position position="274"/>
    </location>
</feature>
<feature type="mutagenesis site" description="Does not change the rate of thrombin or activated protein C/F5 inhibition in the presence or absence of heparin. Slightly reduces the rate of thrombin inhibition in the presence of heparin. Does not inhibit thrombomodulin-enhanced rate of thrombin inhibition in presence of heparin." evidence="17 19">
    <original>K</original>
    <variation>E</variation>
    <location>
        <position position="285"/>
    </location>
</feature>
<feature type="mutagenesis site" description="Does not change the rate of thrombin or activated protein C/F5 inhibition in the presence or absence of heparin. Slightly reduces the rate of thrombin inhibition in the presence of heparin. Does not inhibit thrombomodulin-enhanced rate of thrombin inhibition in presence of heparin." evidence="17 19">
    <original>R</original>
    <variation>E</variation>
    <location>
        <position position="288"/>
    </location>
</feature>
<feature type="mutagenesis site" description="Does not change the rate of thrombin or activated protein C/F5 inhibition in the presence or absence of heparin. Slightly reduces the rate of thrombin inhibition in the presence of heparin. Inhibits weakly thrombomodulin-enhanced rate of thrombin inhibition in presence of heparin." evidence="17 19">
    <original>K</original>
    <variation>E</variation>
    <location>
        <position position="289"/>
    </location>
</feature>
<feature type="mutagenesis site" description="Does not change the rate of thrombin or activated protein C/F5 inhibition in the presence or absence of heparin. Slightly reduces the rate of thrombin inhibition in the presence of heparin. Does not inhibit thrombomodulin-enhanced rate of thrombin inhibition in presence of heparin." evidence="17 19">
    <original>K</original>
    <variation>E</variation>
    <location>
        <position position="292"/>
    </location>
</feature>
<feature type="mutagenesis site" description="Inhibits heterodimer formation with TMPRSS11E." evidence="9">
    <original>T</original>
    <variation>R</variation>
    <location>
        <position position="360"/>
    </location>
</feature>
<feature type="mutagenesis site" description="Increases inhibition of activated protein C/F5 and factor XI/F11 activities. Decreases inhibition of thrombin activity." evidence="29">
    <original>T</original>
    <variation>R</variation>
    <location>
        <position position="371"/>
    </location>
</feature>
<feature type="mutagenesis site" description="Increases inhibition of thrombin activity." evidence="29">
    <original>F</original>
    <variation>P</variation>
    <variation>G</variation>
    <location>
        <position position="372"/>
    </location>
</feature>
<feature type="mutagenesis site" description="Increases inhibition of thrombin activity. Inhibits heterodimer formation with TMPRSS11E." evidence="9 29">
    <original>R</original>
    <variation>P</variation>
    <location>
        <position position="373"/>
    </location>
</feature>
<feature type="mutagenesis site" description="Does not change inhibition of thrombin, activated protein C/F5 and factor XI/F11 activities." evidence="29">
    <original>R</original>
    <variation>P</variation>
    <location>
        <position position="376"/>
    </location>
</feature>
<feature type="mutagenesis site" description="Does not inhibit thrombomodulin-enhanced rate of thrombin inhibition in presence of heparin." evidence="17">
    <original>R</original>
    <variation>E</variation>
    <location>
        <position position="381"/>
    </location>
</feature>
<feature type="sequence conflict" description="In Ref. 10; CAB45766." evidence="38" ref="10">
    <original>K</original>
    <variation>E</variation>
    <location>
        <position position="28"/>
    </location>
</feature>
<feature type="sequence conflict" description="In Ref. 9; AAB26244." evidence="38" ref="9">
    <original>Q</original>
    <variation>L</variation>
    <location>
        <position position="221"/>
    </location>
</feature>
<feature type="sequence conflict" description="In Ref. 1; AAA35688 and 9; AAB26244." evidence="38" ref="1 9">
    <original>G</original>
    <variation>R</variation>
    <location>
        <position position="335"/>
    </location>
</feature>
<feature type="sequence conflict" description="In Ref. 9; AAB26244." evidence="38" ref="9">
    <original>F</original>
    <variation>S</variation>
    <location>
        <position position="384"/>
    </location>
</feature>
<feature type="helix" evidence="41">
    <location>
        <begin position="48"/>
        <end position="59"/>
    </location>
</feature>
<feature type="strand" evidence="41">
    <location>
        <begin position="65"/>
        <end position="67"/>
    </location>
</feature>
<feature type="helix" evidence="41">
    <location>
        <begin position="69"/>
        <end position="81"/>
    </location>
</feature>
<feature type="helix" evidence="41">
    <location>
        <begin position="85"/>
        <end position="94"/>
    </location>
</feature>
<feature type="helix" evidence="41">
    <location>
        <begin position="101"/>
        <end position="117"/>
    </location>
</feature>
<feature type="strand" evidence="41">
    <location>
        <begin position="123"/>
        <end position="135"/>
    </location>
</feature>
<feature type="helix" evidence="41">
    <location>
        <begin position="143"/>
        <end position="153"/>
    </location>
</feature>
<feature type="strand" evidence="41">
    <location>
        <begin position="156"/>
        <end position="159"/>
    </location>
</feature>
<feature type="helix" evidence="41">
    <location>
        <begin position="165"/>
        <end position="179"/>
    </location>
</feature>
<feature type="turn" evidence="41">
    <location>
        <begin position="180"/>
        <end position="182"/>
    </location>
</feature>
<feature type="strand" evidence="41">
    <location>
        <begin position="195"/>
        <end position="211"/>
    </location>
</feature>
<feature type="helix" evidence="41">
    <location>
        <begin position="215"/>
        <end position="217"/>
    </location>
</feature>
<feature type="strand" evidence="41">
    <location>
        <begin position="219"/>
        <end position="228"/>
    </location>
</feature>
<feature type="strand" evidence="41">
    <location>
        <begin position="230"/>
        <end position="247"/>
    </location>
</feature>
<feature type="turn" evidence="41">
    <location>
        <begin position="248"/>
        <end position="251"/>
    </location>
</feature>
<feature type="strand" evidence="41">
    <location>
        <begin position="252"/>
        <end position="262"/>
    </location>
</feature>
<feature type="strand" evidence="41">
    <location>
        <begin position="264"/>
        <end position="270"/>
    </location>
</feature>
<feature type="helix" evidence="41">
    <location>
        <begin position="275"/>
        <end position="281"/>
    </location>
</feature>
<feature type="helix" evidence="41">
    <location>
        <begin position="284"/>
        <end position="293"/>
    </location>
</feature>
<feature type="strand" evidence="41">
    <location>
        <begin position="295"/>
        <end position="304"/>
    </location>
</feature>
<feature type="strand" evidence="41">
    <location>
        <begin position="306"/>
        <end position="313"/>
    </location>
</feature>
<feature type="helix" evidence="41">
    <location>
        <begin position="314"/>
        <end position="316"/>
    </location>
</feature>
<feature type="helix" evidence="41">
    <location>
        <begin position="318"/>
        <end position="321"/>
    </location>
</feature>
<feature type="helix" evidence="41">
    <location>
        <begin position="325"/>
        <end position="327"/>
    </location>
</feature>
<feature type="turn" evidence="41">
    <location>
        <begin position="334"/>
        <end position="336"/>
    </location>
</feature>
<feature type="strand" evidence="39">
    <location>
        <begin position="337"/>
        <end position="339"/>
    </location>
</feature>
<feature type="strand" evidence="41">
    <location>
        <begin position="343"/>
        <end position="355"/>
    </location>
</feature>
<feature type="strand" evidence="41">
    <location>
        <begin position="357"/>
        <end position="371"/>
    </location>
</feature>
<feature type="strand" evidence="40">
    <location>
        <begin position="372"/>
        <end position="375"/>
    </location>
</feature>
<feature type="strand" evidence="41">
    <location>
        <begin position="380"/>
        <end position="383"/>
    </location>
</feature>
<feature type="strand" evidence="41">
    <location>
        <begin position="388"/>
        <end position="404"/>
    </location>
</feature>
<reference key="1">
    <citation type="journal article" date="1987" name="J. Biol. Chem.">
        <title>Characterization of a cDNA for human protein C inhibitor. A new member of the plasma serine protease inhibitor superfamily.</title>
        <authorList>
            <person name="Suzuki K."/>
            <person name="Deyashiki Y."/>
            <person name="Nishioka J."/>
            <person name="Kurachi K."/>
            <person name="Akira M."/>
            <person name="Yamamoto S."/>
            <person name="Hashimoto S."/>
        </authorList>
    </citation>
    <scope>NUCLEOTIDE SEQUENCE [MRNA]</scope>
    <scope>VARIANT ASN-64</scope>
</reference>
<reference key="2">
    <citation type="journal article" date="1990" name="Thromb. Res.">
        <title>Evidence for a glycine residue at position 316 in human protein C inhibitor.</title>
        <authorList>
            <person name="Meijers J.C.M."/>
            <person name="Chung D.W."/>
        </authorList>
    </citation>
    <scope>NUCLEOTIDE SEQUENCE [GENOMIC DNA]</scope>
    <scope>VARIANT ASN-64</scope>
</reference>
<reference key="3">
    <citation type="journal article" date="1991" name="J. Biol. Chem.">
        <title>Organization of the gene coding for human protein C inhibitor (plasminogen activator inhibitor-3). Assignment of the gene to chromosome 14.</title>
        <authorList>
            <person name="Meijers J.C.M."/>
            <person name="Chung D.W."/>
        </authorList>
    </citation>
    <scope>NUCLEOTIDE SEQUENCE [GENOMIC DNA]</scope>
    <scope>VARIANT ASN-64</scope>
</reference>
<reference key="4">
    <citation type="journal article" date="1993" name="Int. J. Hematol.">
        <title>Gene organization of human protein C inhibitor, a member of SERPIN family proteins encoded in five exons.</title>
        <authorList>
            <person name="Hayashi T."/>
            <person name="Suzuki K."/>
        </authorList>
    </citation>
    <scope>NUCLEOTIDE SEQUENCE [GENOMIC DNA]</scope>
</reference>
<reference key="5">
    <citation type="journal article" date="1996" name="Thromb. Haemost.">
        <title>A two-allele polymorphism in protein C inhibitor with varying frequencies in different ethnic populations.</title>
        <authorList>
            <person name="Radtke K.-P."/>
            <person name="Greengard J.S."/>
            <person name="Fernandez J.A."/>
            <person name="Villoutreix B.O."/>
            <person name="Griffin J.H."/>
        </authorList>
    </citation>
    <scope>NUCLEOTIDE SEQUENCE [MRNA]</scope>
    <scope>VARIANTS VAL-55; ASN-64 AND GLU-105</scope>
    <source>
        <tissue>Liver</tissue>
    </source>
</reference>
<reference key="6">
    <citation type="submission" date="2001-03" db="EMBL/GenBank/DDBJ databases">
        <authorList>
            <consortium name="SeattleSNPs variation discovery resource"/>
        </authorList>
    </citation>
    <scope>NUCLEOTIDE SEQUENCE [GENOMIC DNA]</scope>
    <scope>VARIANTS GLY-44; VAL-55; ASN-64; VAL-94; GLU-105; PRO-115 AND ARG-217</scope>
</reference>
<reference key="7">
    <citation type="journal article" date="2003" name="Nature">
        <title>The DNA sequence and analysis of human chromosome 14.</title>
        <authorList>
            <person name="Heilig R."/>
            <person name="Eckenberg R."/>
            <person name="Petit J.-L."/>
            <person name="Fonknechten N."/>
            <person name="Da Silva C."/>
            <person name="Cattolico L."/>
            <person name="Levy M."/>
            <person name="Barbe V."/>
            <person name="De Berardinis V."/>
            <person name="Ureta-Vidal A."/>
            <person name="Pelletier E."/>
            <person name="Vico V."/>
            <person name="Anthouard V."/>
            <person name="Rowen L."/>
            <person name="Madan A."/>
            <person name="Qin S."/>
            <person name="Sun H."/>
            <person name="Du H."/>
            <person name="Pepin K."/>
            <person name="Artiguenave F."/>
            <person name="Robert C."/>
            <person name="Cruaud C."/>
            <person name="Bruels T."/>
            <person name="Jaillon O."/>
            <person name="Friedlander L."/>
            <person name="Samson G."/>
            <person name="Brottier P."/>
            <person name="Cure S."/>
            <person name="Segurens B."/>
            <person name="Aniere F."/>
            <person name="Samain S."/>
            <person name="Crespeau H."/>
            <person name="Abbasi N."/>
            <person name="Aiach N."/>
            <person name="Boscus D."/>
            <person name="Dickhoff R."/>
            <person name="Dors M."/>
            <person name="Dubois I."/>
            <person name="Friedman C."/>
            <person name="Gouyvenoux M."/>
            <person name="James R."/>
            <person name="Madan A."/>
            <person name="Mairey-Estrada B."/>
            <person name="Mangenot S."/>
            <person name="Martins N."/>
            <person name="Menard M."/>
            <person name="Oztas S."/>
            <person name="Ratcliffe A."/>
            <person name="Shaffer T."/>
            <person name="Trask B."/>
            <person name="Vacherie B."/>
            <person name="Bellemere C."/>
            <person name="Belser C."/>
            <person name="Besnard-Gonnet M."/>
            <person name="Bartol-Mavel D."/>
            <person name="Boutard M."/>
            <person name="Briez-Silla S."/>
            <person name="Combette S."/>
            <person name="Dufosse-Laurent V."/>
            <person name="Ferron C."/>
            <person name="Lechaplais C."/>
            <person name="Louesse C."/>
            <person name="Muselet D."/>
            <person name="Magdelenat G."/>
            <person name="Pateau E."/>
            <person name="Petit E."/>
            <person name="Sirvain-Trukniewicz P."/>
            <person name="Trybou A."/>
            <person name="Vega-Czarny N."/>
            <person name="Bataille E."/>
            <person name="Bluet E."/>
            <person name="Bordelais I."/>
            <person name="Dubois M."/>
            <person name="Dumont C."/>
            <person name="Guerin T."/>
            <person name="Haffray S."/>
            <person name="Hammadi R."/>
            <person name="Muanga J."/>
            <person name="Pellouin V."/>
            <person name="Robert D."/>
            <person name="Wunderle E."/>
            <person name="Gauguet G."/>
            <person name="Roy A."/>
            <person name="Sainte-Marthe L."/>
            <person name="Verdier J."/>
            <person name="Verdier-Discala C."/>
            <person name="Hillier L.W."/>
            <person name="Fulton L."/>
            <person name="McPherson J."/>
            <person name="Matsuda F."/>
            <person name="Wilson R."/>
            <person name="Scarpelli C."/>
            <person name="Gyapay G."/>
            <person name="Wincker P."/>
            <person name="Saurin W."/>
            <person name="Quetier F."/>
            <person name="Waterston R."/>
            <person name="Hood L."/>
            <person name="Weissenbach J."/>
        </authorList>
    </citation>
    <scope>NUCLEOTIDE SEQUENCE [LARGE SCALE GENOMIC DNA]</scope>
</reference>
<reference key="8">
    <citation type="journal article" date="2004" name="Genome Res.">
        <title>The status, quality, and expansion of the NIH full-length cDNA project: the Mammalian Gene Collection (MGC).</title>
        <authorList>
            <consortium name="The MGC Project Team"/>
        </authorList>
    </citation>
    <scope>NUCLEOTIDE SEQUENCE [LARGE SCALE MRNA]</scope>
    <scope>VARIANT ASN-64</scope>
    <source>
        <tissue>Skin</tissue>
    </source>
</reference>
<reference key="9">
    <citation type="journal article" date="1993" name="Mol. Reprod. Dev.">
        <title>Human sperm-egg binding is inhibited by peptides corresponding to core region of an acrosomal serine protease inhibitor.</title>
        <authorList>
            <person name="Moore A."/>
            <person name="Penfold L.M."/>
            <person name="Johnson J.L."/>
            <person name="Latchman D.S."/>
            <person name="Moore H.D."/>
        </authorList>
    </citation>
    <scope>NUCLEOTIDE SEQUENCE [MRNA] OF 27-406</scope>
    <scope>VARIANT ASN-64</scope>
    <source>
        <tissue>Testis</tissue>
    </source>
</reference>
<reference key="10">
    <citation type="journal article" date="2007" name="BMC Genomics">
        <title>The full-ORF clone resource of the German cDNA consortium.</title>
        <authorList>
            <person name="Bechtel S."/>
            <person name="Rosenfelder H."/>
            <person name="Duda A."/>
            <person name="Schmidt C.P."/>
            <person name="Ernst U."/>
            <person name="Wellenreuther R."/>
            <person name="Mehrle A."/>
            <person name="Schuster C."/>
            <person name="Bahr A."/>
            <person name="Bloecker H."/>
            <person name="Heubner D."/>
            <person name="Hoerlein A."/>
            <person name="Michel G."/>
            <person name="Wedler H."/>
            <person name="Koehrer K."/>
            <person name="Ottenwaelder B."/>
            <person name="Poustka A."/>
            <person name="Wiemann S."/>
            <person name="Schupp I."/>
        </authorList>
    </citation>
    <scope>NUCLEOTIDE SEQUENCE [LARGE SCALE MRNA] OF 28-406</scope>
    <scope>VARIANT ASN-64</scope>
    <source>
        <tissue>Testis</tissue>
    </source>
</reference>
<reference key="11">
    <citation type="journal article" date="1989" name="Thromb. Haemost.">
        <title>Protein C inhibitor from human plasma: characterization of native and cleaved inhibitor and demonstration of inhibitor complexes with plasma kallikrein.</title>
        <authorList>
            <person name="Laurell M."/>
            <person name="Stenflo J."/>
        </authorList>
    </citation>
    <scope>PROTEIN SEQUENCE OF 20-39</scope>
</reference>
<reference key="12">
    <citation type="journal article" date="1984" name="J. Biochem.">
        <title>Mechanism of inhibition of activated protein C by protein C inhibitor.</title>
        <authorList>
            <person name="Suzuki K."/>
            <person name="Nishioka J."/>
            <person name="Kusumoto H."/>
            <person name="Hashimoto S."/>
        </authorList>
    </citation>
    <scope>FUNCTION IN BLOOD PLASMA SERINE PROTEASE INHIBITION</scope>
    <scope>HETERODIMER WITH F2; F5 AND F10</scope>
</reference>
<reference key="13">
    <citation type="journal article" date="1987" name="Biol. Chem. Hoppe-Seyler">
        <title>Inhibition of urokinase by protein C-inhibitor (PCI). Evidence for identity of PCI and plasminogen activator inhibitor 3.</title>
        <authorList>
            <person name="Stief T.W."/>
            <person name="Radtke K.P."/>
            <person name="Heimburger N."/>
        </authorList>
    </citation>
    <scope>FUNCTION IN BLOOD PLASMA PLAU INHIBITION</scope>
    <scope>HETERODIMER WITH PLAU</scope>
</reference>
<reference key="14">
    <citation type="journal article" date="1988" name="Biochemistry">
        <title>Inactivation of human plasma kallikrein and factor XIa by protein C inhibitor.</title>
        <authorList>
            <person name="Meijers J.C."/>
            <person name="Kanters D.H."/>
            <person name="Vlooswijk R.A."/>
            <person name="van Erp H.E."/>
            <person name="Hessing M."/>
            <person name="Bouma B.N."/>
        </authorList>
    </citation>
    <scope>FUNCTION IN BLOOD PLASMA SERINE PROTEASE INHIBITION</scope>
    <scope>HETERODIMER WITH F5; F11 AND KLKB1</scope>
</reference>
<reference key="15">
    <citation type="journal article" date="1991" name="Thromb. Res.">
        <title>Functionally active protein C inhibitor/plasminogen activator inhibitor-3 (PCI/PAI-3) is secreted in seminal vesicles, occurs at high concentrations in human seminal plasma and complexes with prostate-specific antigen.</title>
        <authorList>
            <person name="Espana F."/>
            <person name="Gilabert J."/>
            <person name="Estelles A."/>
            <person name="Romeu A."/>
            <person name="Aznar J."/>
            <person name="Cabo A."/>
        </authorList>
    </citation>
    <scope>FUNCTION IN SEMINAL PLASMA KLK3 INHIBITION</scope>
    <scope>HETERODIMER WITH KLK3</scope>
    <scope>SUBCELLULAR LOCATION</scope>
</reference>
<reference key="16">
    <citation type="journal article" date="1992" name="J. Clin. Invest.">
        <title>Protein C inhibitor in human body fluids. Seminal plasma is rich in inhibitor antigen deriving from cells throughout the male reproductive system.</title>
        <authorList>
            <person name="Laurell M."/>
            <person name="Christensson A."/>
            <person name="Abrahamsson P.A."/>
            <person name="Stenflo J."/>
            <person name="Lilja H."/>
        </authorList>
    </citation>
    <scope>TISSUE SPECIFICITY</scope>
</reference>
<reference key="17">
    <citation type="journal article" date="1994" name="Am. J. Physiol.">
        <title>Inhibition of acrosin by protein C inhibitor and localization of protein C inhibitor to spermatozoa.</title>
        <authorList>
            <person name="Zheng X."/>
            <person name="Geiger M."/>
            <person name="Ecke S."/>
            <person name="Bielek E."/>
            <person name="Donner P."/>
            <person name="Eberspacher U."/>
            <person name="Schleuning W.D."/>
            <person name="Binder B.R."/>
        </authorList>
    </citation>
    <scope>FUNCTION IN SEMINAL PLASMA ACR INHIBITION</scope>
    <scope>HETERODIMER WITH ACR</scope>
    <scope>SUBCELLULAR LOCATION</scope>
</reference>
<reference key="18">
    <citation type="journal article" date="1995" name="Biochemistry">
        <title>Intermolecular interactions between protein C inhibitor and coagulation proteases.</title>
        <authorList>
            <person name="Cooper S.T."/>
            <person name="Whinna H.C."/>
            <person name="Jackson T.P."/>
            <person name="Boyd J.M."/>
            <person name="Church F.C."/>
        </authorList>
    </citation>
    <scope>FUNCTION IN SERINE PROTEASE INHIBITION</scope>
    <scope>MUTAGENESIS OF THR-371; PHE-372; ARG-373 AND ARG-376</scope>
</reference>
<reference key="19">
    <citation type="journal article" date="1995" name="Eur. J. Biochem.">
        <title>Complexes of tissue kallikrein with protein C inhibitor in human semen and urine.</title>
        <authorList>
            <person name="Espana F."/>
            <person name="Fink E."/>
            <person name="Sanchez-Cuenca J."/>
            <person name="Gilabert J."/>
            <person name="Estelles A."/>
            <person name="Witzgall K."/>
        </authorList>
    </citation>
    <scope>FUNCTION IN SEMINAL PLASMA AND URINE KALLIKREIN INHIBITION</scope>
    <scope>HETERODIMER WITH TISSUE KALLIKREIN</scope>
    <scope>SUBCELLULAR LOCATION</scope>
</reference>
<reference key="20">
    <citation type="journal article" date="1996" name="Eur. J. Biochem.">
        <title>Characterization of semenogelin II and its molecular interaction with prostate-specific antigen and protein C inhibitor.</title>
        <authorList>
            <person name="Kise H."/>
            <person name="Nishioka J."/>
            <person name="Kawamura J."/>
            <person name="Suzuki K."/>
        </authorList>
    </citation>
    <scope>FUNCTION IN SEMINAL PLASMA KLK3 INHIBITION</scope>
    <scope>HETERODIMER WITH F5</scope>
    <scope>INTERACTION WITH SEMG2</scope>
</reference>
<reference key="21">
    <citation type="journal article" date="1998" name="Blood">
        <title>Protein C inhibitor acts as a procoagulant by inhibiting the thrombomodulin-induced activation of protein C in human plasma.</title>
        <authorList>
            <person name="Elisen M.G."/>
            <person name="von dem Borne P.A."/>
            <person name="Bouma B.N."/>
            <person name="Meijers J.C."/>
        </authorList>
    </citation>
    <scope>FUNCTION IN BLOOD PLASMA F5 INHIBITION</scope>
</reference>
<reference key="22">
    <citation type="journal article" date="1998" name="Biol. Reprod.">
        <title>Protein C inhibitor may modulate human sperm-oocyte interactions.</title>
        <authorList>
            <person name="Elisen M.G."/>
            <person name="van Kooij R.J."/>
            <person name="Nolte M.A."/>
            <person name="Marquart J.A."/>
            <person name="Lock T.M."/>
            <person name="Bouma B.N."/>
            <person name="Meijers J.C."/>
        </authorList>
    </citation>
    <scope>FUNCTION IN FERTILIZATION</scope>
    <scope>SUBCELLULAR LOCATION</scope>
    <scope>TISSUE SPECIFICITY</scope>
</reference>
<reference key="23">
    <citation type="journal article" date="1998" name="J. Biol. Chem.">
        <title>Protein C inhibitor secreted from activated platelets efficiently inhibits activated protein C on phosphatidylethanolamine of platelet membrane and microvesicles.</title>
        <authorList>
            <person name="Nishioka J."/>
            <person name="Ning M."/>
            <person name="Hayashi T."/>
            <person name="Suzuki K."/>
        </authorList>
    </citation>
    <scope>FUNCTION IN BLOOD PLASMA F5 INHIBITION</scope>
    <scope>HETERODIMER WITH F5</scope>
    <scope>SUBCELLULAR LOCATION</scope>
    <scope>TISSUE SPECIFICITY</scope>
</reference>
<reference key="24">
    <citation type="journal article" date="1999" name="Mol. Hum. Reprod.">
        <title>Functionally inactive protein C inhibitor in seminal plasma may be associated with infertility.</title>
        <authorList>
            <person name="He S."/>
            <person name="Lin Y.L."/>
            <person name="Liu Y.X."/>
        </authorList>
    </citation>
    <scope>FUNCTION IN SEMINAL PLASMA SERINE PROTEASES INHIBITION</scope>
    <scope>HETERODIMER WITH PLAT AND PLAU</scope>
</reference>
<reference key="25">
    <citation type="journal article" date="2001" name="Eur. J. Biochem.">
        <title>Binding of retinoic acid by the inhibitory serpin protein C inhibitor.</title>
        <authorList>
            <person name="Jerabek I."/>
            <person name="Zechmeister-Machhart M."/>
            <person name="Binder B.R."/>
            <person name="Geiger M."/>
        </authorList>
    </citation>
    <scope>FUNCTION IN RETINOIC ACID TRANSPORT</scope>
</reference>
<reference key="26">
    <citation type="journal article" date="2004" name="Int. J. Cancer">
        <title>Regulation of carcinoma cell invasion by protein C inhibitor whose expression is decreased in renal cell carcinoma.</title>
        <authorList>
            <person name="Wakita T."/>
            <person name="Hayashi T."/>
            <person name="Nishioka J."/>
            <person name="Tamaru H."/>
            <person name="Akita N."/>
            <person name="Asanuma K."/>
            <person name="Kamada H."/>
            <person name="Gabazza E.C."/>
            <person name="Ido M."/>
            <person name="Kawamura J."/>
            <person name="Suzuki K."/>
        </authorList>
    </citation>
    <scope>FUNCTION AS REGULATOR OF TUMOR CELL INVASION</scope>
    <scope>HETERODIMER WITH PLAU</scope>
    <scope>TISSUE SPECIFICITY</scope>
</reference>
<reference key="27">
    <citation type="journal article" date="2004" name="J. Biol. Chem.">
        <title>Mouse DESC1 is located within a cluster of seven DESC1-like genes and encodes a type II transmembrane serine protease that forms serpin inhibitory complexes.</title>
        <authorList>
            <person name="Hobson J.P."/>
            <person name="Netzel-Arnett S."/>
            <person name="Szabo R."/>
            <person name="Rehault S.M."/>
            <person name="Church F.C."/>
            <person name="Strickland D.K."/>
            <person name="Lawrence D.A."/>
            <person name="Antalis T.M."/>
            <person name="Bugge T.H."/>
        </authorList>
    </citation>
    <scope>FUNCTION IN MEMBRANE-ANCHORED SERINE PROTEASE TMPRSS11E INHIBITION</scope>
    <scope>HETERODIMER WITH TMPRSS11E</scope>
    <scope>PROTEOLYTIC CLEAVAGE</scope>
    <scope>MUTAGENESIS OF THR-360 AND ARG-373</scope>
</reference>
<reference key="28">
    <citation type="journal article" date="2004" name="J. Thromb. Haemost.">
        <title>Characterization of a novel human protein C inhibitor (PCI) gene transgenic mouse useful for studying the role of PCI in physiological and pathological conditions.</title>
        <authorList>
            <person name="Hayashi T."/>
            <person name="Nishioka J."/>
            <person name="Kamada H."/>
            <person name="Asanuma K."/>
            <person name="Kondo H."/>
            <person name="Gabazza E.C."/>
            <person name="Ido M."/>
            <person name="Suzuki K."/>
        </authorList>
    </citation>
    <scope>FUNCTION IN BLOOD PLASMA F5 INHIBITION</scope>
    <scope>HETERODIMER WITH F5</scope>
    <scope>TISSUE SPECIFICITY</scope>
</reference>
<reference key="29">
    <citation type="journal article" date="2004" name="Proteomics">
        <title>Screening for N-glycosylated proteins by liquid chromatography mass spectrometry.</title>
        <authorList>
            <person name="Bunkenborg J."/>
            <person name="Pilch B.J."/>
            <person name="Podtelejnikov A.V."/>
            <person name="Wisniewski J.R."/>
        </authorList>
    </citation>
    <scope>GLYCOSYLATION [LARGE SCALE ANALYSIS] AT ASN-249</scope>
    <source>
        <tissue>Plasma</tissue>
    </source>
</reference>
<reference key="30">
    <citation type="journal article" date="2005" name="Biochem. J.">
        <title>Matriptase-3 is a novel phylogenetically preserved membrane-anchored serine protease with broad serpin reactivity.</title>
        <authorList>
            <person name="Szabo R."/>
            <person name="Netzel-Arnett S."/>
            <person name="Hobson J.P."/>
            <person name="Antalis T.M."/>
            <person name="Bugge T.H."/>
        </authorList>
    </citation>
    <scope>FUNCTION IN MEMBRANE-ANCHORED SERINE PROTEASE TMPRSS7 INHIBITION</scope>
    <scope>HETERODIMER WITH TMPRSS7</scope>
</reference>
<reference key="31">
    <citation type="journal article" date="2005" name="J. Proteome Res.">
        <title>Human plasma N-glycoproteome analysis by immunoaffinity subtraction, hydrazide chemistry, and mass spectrometry.</title>
        <authorList>
            <person name="Liu T."/>
            <person name="Qian W.-J."/>
            <person name="Gritsenko M.A."/>
            <person name="Camp D.G. II"/>
            <person name="Monroe M.E."/>
            <person name="Moore R.J."/>
            <person name="Smith R.D."/>
        </authorList>
    </citation>
    <scope>GLYCOSYLATION [LARGE SCALE ANALYSIS] AT ASN-262 AND ASN-338</scope>
    <source>
        <tissue>Plasma</tissue>
    </source>
</reference>
<reference key="32">
    <citation type="journal article" date="2007" name="Acta Histochem.">
        <title>Immunolocalization of protein C inhibitor in differentiation of human epidermal keratinocytes.</title>
        <authorList>
            <person name="Zhang C."/>
            <person name="Li X."/>
            <person name="Lian X."/>
            <person name="Wang Y."/>
            <person name="Zeng Y."/>
            <person name="Yang K."/>
            <person name="Yu J."/>
            <person name="Gao Q."/>
            <person name="Yang T."/>
        </authorList>
    </citation>
    <scope>TISSUE SPECIFICITY</scope>
</reference>
<reference key="33">
    <citation type="journal article" date="2008" name="J. Biol. Chem.">
        <title>N-glycans and the N terminus of protein C inhibitor affect the cofactor-enhanced rates of thrombin inhibition.</title>
        <authorList>
            <person name="Sun W."/>
            <person name="Parry S."/>
            <person name="Panico M."/>
            <person name="Morris H.R."/>
            <person name="Kjellberg M."/>
            <person name="Engstrom A."/>
            <person name="Dell A."/>
            <person name="Schedin-Weiss S."/>
        </authorList>
    </citation>
    <scope>FUNCTION</scope>
    <scope>PROTEOLYTIC CLEAVAGE</scope>
    <scope>GLYCOSYLATION AT ASN-249; ASN-262 AND ASN-338</scope>
    <scope>STRUCTURE OF CARBOHYDRATES</scope>
    <scope>SUBCELLULAR LOCATION</scope>
    <scope>TISSUE SPECIFICITY</scope>
    <scope>IDENTIFICATION BY MASS SPECTROMETRY</scope>
</reference>
<reference key="34">
    <citation type="journal article" date="2008" name="Proc. Natl. Acad. Sci. U.S.A.">
        <title>Molecular basis of thrombin recognition by protein C inhibitor revealed by the 1.6-A structure of the heparin-bridged complex.</title>
        <authorList>
            <person name="Li W."/>
            <person name="Adams T.E."/>
            <person name="Nangalia J."/>
            <person name="Esmon C.T."/>
            <person name="Huntington J.A."/>
        </authorList>
    </citation>
    <scope>MUTAGENESIS OF ARG-253; GLU-272; LYS-274; LYS-285; ARG-288; LYS-289; LYS-292 AND ARG-381</scope>
</reference>
<reference key="35">
    <citation type="journal article" date="2010" name="Biochem. Biophys. Res. Commun.">
        <title>Further insight into the roles of the glycans attached to human blood protein C inhibitor.</title>
        <authorList>
            <person name="Sun W."/>
            <person name="Parry S."/>
            <person name="Ubhayasekera W."/>
            <person name="Engstrom A."/>
            <person name="Dell A."/>
            <person name="Schedin-Weiss S."/>
        </authorList>
    </citation>
    <scope>GLYCOSYLATION AT THR-39</scope>
    <scope>IDENTIFICATION BY MASS SPECTROMETRY</scope>
</reference>
<reference key="36">
    <citation type="journal article" date="2012" name="Mol. Cell. Proteomics">
        <title>Human urinary glycoproteomics; attachment site specific analysis of N- and O-linked glycosylations by CID and ECD.</title>
        <authorList>
            <person name="Halim A."/>
            <person name="Nilsson J."/>
            <person name="Ruetschi U."/>
            <person name="Hesse C."/>
            <person name="Larson G."/>
        </authorList>
    </citation>
    <scope>GLYCOSYLATION AT THR-39</scope>
    <scope>STRUCTURE OF CARBOHYDRATES</scope>
    <scope>IDENTIFICATION BY MASS SPECTROMETRY</scope>
</reference>
<reference key="37">
    <citation type="journal article" date="1990" name="Proc. Natl. Acad. Sci. U.S.A.">
        <title>Elucidating the structural chemistry of glycosaminoglycan recognition by protein C inhibitor.</title>
        <authorList>
            <person name="Kuhn L.A."/>
            <person name="Griffin J.H."/>
            <person name="Fisher C.L."/>
            <person name="Greengard J.S."/>
            <person name="Bouma B.N."/>
            <person name="Espana F."/>
            <person name="Tainer J.A."/>
        </authorList>
    </citation>
    <scope>3D-STRUCTURE MODELING</scope>
</reference>
<reference key="38">
    <citation type="journal article" date="2003" name="Structure">
        <title>Crystal structure of protein C inhibitor provides insights into hormone binding and heparin activation.</title>
        <authorList>
            <person name="Huntington J.A."/>
            <person name="Kjellberg M."/>
            <person name="Stenflo J."/>
        </authorList>
    </citation>
    <scope>X-RAY CRYSTALLOGRAPHY (2.4 ANGSTROMS) OF 30-406</scope>
    <scope>GLYCOSYLATION AT ASN-262</scope>
</reference>
<reference key="39">
    <citation type="journal article" date="2007" name="J. Biol. Chem.">
        <title>Structure of native protein C inhibitor provides insight into its multiple functions.</title>
        <authorList>
            <person name="Li W."/>
            <person name="Adams T.E."/>
            <person name="Kjellberg M."/>
            <person name="Stenflo J."/>
            <person name="Huntington J.A."/>
        </authorList>
    </citation>
    <scope>X-RAY CRYSTALLOGRAPHY (2.3 ANGSTROMS) OF 36-406</scope>
</reference>
<reference key="40">
    <citation type="journal article" date="2008" name="J. Biol. Chem.">
        <title>The heparin binding site of protein C inhibitor is protease-dependent.</title>
        <authorList>
            <person name="Li W."/>
            <person name="Huntington J.A."/>
        </authorList>
    </citation>
    <scope>X-RAY CRYSTALLOGRAPHY (1.55 ANGSTROMS) OF 37-406 IN COMPLEX WITH SYNTHETIC HEPARIN</scope>
    <scope>HEPARIN-BINDING SITES</scope>
    <scope>MUTAGENESIS OF ARG-248; LYS-285; ARG-288; LYS-289 AND LYS-292</scope>
</reference>
<reference key="41">
    <citation type="journal article" date="1999" name="Nat. Genet.">
        <title>Characterization of single-nucleotide polymorphisms in coding regions of human genes.</title>
        <authorList>
            <person name="Cargill M."/>
            <person name="Altshuler D."/>
            <person name="Ireland J."/>
            <person name="Sklar P."/>
            <person name="Ardlie K."/>
            <person name="Patil N."/>
            <person name="Shaw N."/>
            <person name="Lane C.R."/>
            <person name="Lim E.P."/>
            <person name="Kalyanaraman N."/>
            <person name="Nemesh J."/>
            <person name="Ziaugra L."/>
            <person name="Friedland L."/>
            <person name="Rolfe A."/>
            <person name="Warrington J."/>
            <person name="Lipshutz R."/>
            <person name="Daley G.Q."/>
            <person name="Lander E.S."/>
        </authorList>
    </citation>
    <scope>VARIANTS VAL-55; ASN-64; GLU-105; ALA-121 AND ARG-217</scope>
</reference>
<reference key="42">
    <citation type="journal article" date="1999" name="Nat. Genet.">
        <authorList>
            <person name="Cargill M."/>
            <person name="Altshuler D."/>
            <person name="Ireland J."/>
            <person name="Sklar P."/>
            <person name="Ardlie K."/>
            <person name="Patil N."/>
            <person name="Shaw N."/>
            <person name="Lane C.R."/>
            <person name="Lim E.P."/>
            <person name="Kalyanaraman N."/>
            <person name="Nemesh J."/>
            <person name="Ziaugra L."/>
            <person name="Friedland L."/>
            <person name="Rolfe A."/>
            <person name="Warrington J."/>
            <person name="Lipshutz R."/>
            <person name="Daley G.Q."/>
            <person name="Lander E.S."/>
        </authorList>
    </citation>
    <scope>ERRATUM OF PUBMED:10391209</scope>
</reference>
<keyword id="KW-0002">3D-structure</keyword>
<keyword id="KW-0903">Direct protein sequencing</keyword>
<keyword id="KW-0278">Fertilization</keyword>
<keyword id="KW-0325">Glycoprotein</keyword>
<keyword id="KW-0358">Heparin-binding</keyword>
<keyword id="KW-0445">Lipid transport</keyword>
<keyword id="KW-0646">Protease inhibitor</keyword>
<keyword id="KW-1267">Proteomics identification</keyword>
<keyword id="KW-1185">Reference proteome</keyword>
<keyword id="KW-0964">Secreted</keyword>
<keyword id="KW-0722">Serine protease inhibitor</keyword>
<keyword id="KW-0732">Signal</keyword>
<keyword id="KW-0813">Transport</keyword>
<gene>
    <name type="primary">SERPINA5</name>
    <name type="synonym">PCI</name>
    <name type="synonym">PLANH3</name>
    <name type="synonym">PROCI</name>
</gene>
<proteinExistence type="evidence at protein level"/>
<protein>
    <recommendedName>
        <fullName>Plasma serine protease inhibitor</fullName>
    </recommendedName>
    <alternativeName>
        <fullName>Acrosomal serine protease inhibitor</fullName>
    </alternativeName>
    <alternativeName>
        <fullName>Plasminogen activator inhibitor 3</fullName>
        <shortName>PAI-3</shortName>
        <shortName>PAI3</shortName>
    </alternativeName>
    <alternativeName>
        <fullName>Protein C inhibitor</fullName>
        <shortName>PCI</shortName>
    </alternativeName>
    <alternativeName>
        <fullName>Serpin A5</fullName>
    </alternativeName>
</protein>
<dbReference type="EMBL" id="J02639">
    <property type="protein sequence ID" value="AAA35688.1"/>
    <property type="molecule type" value="mRNA"/>
</dbReference>
<dbReference type="EMBL" id="M68516">
    <property type="protein sequence ID" value="AAA02811.1"/>
    <property type="molecule type" value="Genomic_DNA"/>
</dbReference>
<dbReference type="EMBL" id="S69366">
    <property type="protein sequence ID" value="AAB30461.1"/>
    <property type="molecule type" value="Genomic_DNA"/>
</dbReference>
<dbReference type="EMBL" id="S69364">
    <property type="protein sequence ID" value="AAB30461.1"/>
    <property type="status" value="JOINED"/>
    <property type="molecule type" value="Genomic_DNA"/>
</dbReference>
<dbReference type="EMBL" id="S69574">
    <property type="protein sequence ID" value="AAB30461.1"/>
    <property type="status" value="JOINED"/>
    <property type="molecule type" value="Genomic_DNA"/>
</dbReference>
<dbReference type="EMBL" id="S69365">
    <property type="protein sequence ID" value="AAB30461.1"/>
    <property type="status" value="JOINED"/>
    <property type="molecule type" value="Genomic_DNA"/>
</dbReference>
<dbReference type="EMBL" id="U35464">
    <property type="protein sequence ID" value="AAB60386.1"/>
    <property type="molecule type" value="mRNA"/>
</dbReference>
<dbReference type="EMBL" id="AF361796">
    <property type="protein sequence ID" value="AAK27240.1"/>
    <property type="molecule type" value="Genomic_DNA"/>
</dbReference>
<dbReference type="EMBL" id="AL049839">
    <property type="status" value="NOT_ANNOTATED_CDS"/>
    <property type="molecule type" value="Genomic_DNA"/>
</dbReference>
<dbReference type="EMBL" id="BC008915">
    <property type="protein sequence ID" value="AAH08915.1"/>
    <property type="molecule type" value="mRNA"/>
</dbReference>
<dbReference type="EMBL" id="S58545">
    <property type="protein sequence ID" value="AAB26244.2"/>
    <property type="molecule type" value="mRNA"/>
</dbReference>
<dbReference type="EMBL" id="AL080185">
    <property type="protein sequence ID" value="CAB45766.1"/>
    <property type="molecule type" value="mRNA"/>
</dbReference>
<dbReference type="CCDS" id="CCDS9928.1"/>
<dbReference type="PIR" id="A39339">
    <property type="entry name" value="A39339"/>
</dbReference>
<dbReference type="RefSeq" id="NP_000615.3">
    <property type="nucleotide sequence ID" value="NM_000624.5"/>
</dbReference>
<dbReference type="PDB" id="1LQ8">
    <property type="method" value="X-ray"/>
    <property type="resolution" value="2.40 A"/>
    <property type="chains" value="A/C/E/G=30-375, B/D/F/H=376-406"/>
</dbReference>
<dbReference type="PDB" id="2HI9">
    <property type="method" value="X-ray"/>
    <property type="resolution" value="2.30 A"/>
    <property type="chains" value="A/B/C=44-406"/>
</dbReference>
<dbReference type="PDB" id="2OL2">
    <property type="method" value="X-ray"/>
    <property type="resolution" value="2.00 A"/>
    <property type="chains" value="A/B=36-406"/>
</dbReference>
<dbReference type="PDB" id="3DY0">
    <property type="method" value="X-ray"/>
    <property type="resolution" value="1.55 A"/>
    <property type="chains" value="A=37-372, B=379-406"/>
</dbReference>
<dbReference type="PDBsum" id="1LQ8"/>
<dbReference type="PDBsum" id="2HI9"/>
<dbReference type="PDBsum" id="2OL2"/>
<dbReference type="PDBsum" id="3DY0"/>
<dbReference type="SMR" id="P05154"/>
<dbReference type="BioGRID" id="111135">
    <property type="interactions" value="33"/>
</dbReference>
<dbReference type="CORUM" id="P05154"/>
<dbReference type="DIP" id="DIP-29869N"/>
<dbReference type="FunCoup" id="P05154">
    <property type="interactions" value="108"/>
</dbReference>
<dbReference type="IntAct" id="P05154">
    <property type="interactions" value="56"/>
</dbReference>
<dbReference type="MINT" id="P05154"/>
<dbReference type="STRING" id="9606.ENSP00000333203"/>
<dbReference type="BindingDB" id="P05154"/>
<dbReference type="DrugBank" id="DB12635">
    <property type="generic name" value="Aleplasinin"/>
</dbReference>
<dbReference type="DrugBank" id="DB00055">
    <property type="generic name" value="Drotrecogin alfa"/>
</dbReference>
<dbReference type="DrugBank" id="DB05961">
    <property type="generic name" value="PPL-100"/>
</dbReference>
<dbReference type="DrugBank" id="DB05413">
    <property type="generic name" value="Tifuvirtide"/>
</dbReference>
<dbReference type="DrugBank" id="DB00013">
    <property type="generic name" value="Urokinase"/>
</dbReference>
<dbReference type="MEROPS" id="I04.004"/>
<dbReference type="GlyConnect" id="663">
    <property type="glycosylation" value="12 N-Linked glycans (1 site), 1 O-Linked glycan (1 site)"/>
</dbReference>
<dbReference type="GlyCosmos" id="P05154">
    <property type="glycosylation" value="4 sites, 19 glycans"/>
</dbReference>
<dbReference type="GlyGen" id="P05154">
    <property type="glycosylation" value="5 sites, 59 N-linked glycans (2 sites), 3 O-linked glycans (2 sites)"/>
</dbReference>
<dbReference type="iPTMnet" id="P05154"/>
<dbReference type="PhosphoSitePlus" id="P05154"/>
<dbReference type="BioMuta" id="SERPINA5"/>
<dbReference type="DMDM" id="322510122"/>
<dbReference type="CPTAC" id="non-CPTAC-1149"/>
<dbReference type="jPOST" id="P05154"/>
<dbReference type="MassIVE" id="P05154"/>
<dbReference type="PaxDb" id="9606-ENSP00000333203"/>
<dbReference type="PeptideAtlas" id="P05154"/>
<dbReference type="ProteomicsDB" id="51805"/>
<dbReference type="Antibodypedia" id="27096">
    <property type="antibodies" value="558 antibodies from 34 providers"/>
</dbReference>
<dbReference type="DNASU" id="5104"/>
<dbReference type="Ensembl" id="ENST00000329597.12">
    <property type="protein sequence ID" value="ENSP00000333203.7"/>
    <property type="gene ID" value="ENSG00000188488.14"/>
</dbReference>
<dbReference type="Ensembl" id="ENST00000553780.5">
    <property type="protein sequence ID" value="ENSP00000450837.1"/>
    <property type="gene ID" value="ENSG00000188488.14"/>
</dbReference>
<dbReference type="Ensembl" id="ENST00000554276.1">
    <property type="protein sequence ID" value="ENSP00000451610.1"/>
    <property type="gene ID" value="ENSG00000188488.14"/>
</dbReference>
<dbReference type="Ensembl" id="ENST00000554866.5">
    <property type="protein sequence ID" value="ENSP00000451126.1"/>
    <property type="gene ID" value="ENSG00000188488.14"/>
</dbReference>
<dbReference type="GeneID" id="5104"/>
<dbReference type="KEGG" id="hsa:5104"/>
<dbReference type="MANE-Select" id="ENST00000329597.12">
    <property type="protein sequence ID" value="ENSP00000333203.7"/>
    <property type="RefSeq nucleotide sequence ID" value="NM_000624.6"/>
    <property type="RefSeq protein sequence ID" value="NP_000615.3"/>
</dbReference>
<dbReference type="UCSC" id="uc001ydm.3">
    <property type="organism name" value="human"/>
</dbReference>
<dbReference type="AGR" id="HGNC:8723"/>
<dbReference type="CTD" id="5104"/>
<dbReference type="DisGeNET" id="5104"/>
<dbReference type="GeneCards" id="SERPINA5"/>
<dbReference type="HGNC" id="HGNC:8723">
    <property type="gene designation" value="SERPINA5"/>
</dbReference>
<dbReference type="HPA" id="ENSG00000188488">
    <property type="expression patterns" value="Tissue enhanced (adrenal gland, liver, testis)"/>
</dbReference>
<dbReference type="MIM" id="601841">
    <property type="type" value="gene"/>
</dbReference>
<dbReference type="neXtProt" id="NX_P05154"/>
<dbReference type="OpenTargets" id="ENSG00000188488"/>
<dbReference type="VEuPathDB" id="HostDB:ENSG00000188488"/>
<dbReference type="eggNOG" id="KOG2392">
    <property type="taxonomic scope" value="Eukaryota"/>
</dbReference>
<dbReference type="GeneTree" id="ENSGT00940000162217"/>
<dbReference type="HOGENOM" id="CLU_023330_2_1_1"/>
<dbReference type="InParanoid" id="P05154"/>
<dbReference type="OMA" id="QVPMMNR"/>
<dbReference type="OrthoDB" id="671595at2759"/>
<dbReference type="PAN-GO" id="P05154">
    <property type="GO annotations" value="3 GO annotations based on evolutionary models"/>
</dbReference>
<dbReference type="PhylomeDB" id="P05154"/>
<dbReference type="TreeFam" id="TF343201"/>
<dbReference type="PathwayCommons" id="P05154"/>
<dbReference type="Reactome" id="R-HSA-140837">
    <property type="pathway name" value="Intrinsic Pathway of Fibrin Clot Formation"/>
</dbReference>
<dbReference type="Reactome" id="R-HSA-140875">
    <property type="pathway name" value="Common Pathway of Fibrin Clot Formation"/>
</dbReference>
<dbReference type="SABIO-RK" id="P05154"/>
<dbReference type="SignaLink" id="P05154"/>
<dbReference type="SIGNOR" id="P05154"/>
<dbReference type="BioGRID-ORCS" id="5104">
    <property type="hits" value="18 hits in 1156 CRISPR screens"/>
</dbReference>
<dbReference type="ChiTaRS" id="SERPINA5">
    <property type="organism name" value="human"/>
</dbReference>
<dbReference type="EvolutionaryTrace" id="P05154"/>
<dbReference type="GeneWiki" id="Protein_C_inhibitor"/>
<dbReference type="GenomeRNAi" id="5104"/>
<dbReference type="Pharos" id="P05154">
    <property type="development level" value="Tbio"/>
</dbReference>
<dbReference type="PRO" id="PR:P05154"/>
<dbReference type="Proteomes" id="UP000005640">
    <property type="component" value="Chromosome 14"/>
</dbReference>
<dbReference type="RNAct" id="P05154">
    <property type="molecule type" value="protein"/>
</dbReference>
<dbReference type="Bgee" id="ENSG00000188488">
    <property type="expression patterns" value="Expressed in right adrenal gland cortex and 146 other cell types or tissues"/>
</dbReference>
<dbReference type="ExpressionAtlas" id="P05154">
    <property type="expression patterns" value="baseline and differential"/>
</dbReference>
<dbReference type="GO" id="GO:0002080">
    <property type="term" value="C:acrosomal membrane"/>
    <property type="evidence" value="ECO:0000314"/>
    <property type="project" value="UniProtKB"/>
</dbReference>
<dbReference type="GO" id="GO:0009897">
    <property type="term" value="C:external side of plasma membrane"/>
    <property type="evidence" value="ECO:0000314"/>
    <property type="project" value="UniProtKB"/>
</dbReference>
<dbReference type="GO" id="GO:0070062">
    <property type="term" value="C:extracellular exosome"/>
    <property type="evidence" value="ECO:0000314"/>
    <property type="project" value="UniProtKB"/>
</dbReference>
<dbReference type="GO" id="GO:0005576">
    <property type="term" value="C:extracellular region"/>
    <property type="evidence" value="ECO:0000304"/>
    <property type="project" value="UniProtKB"/>
</dbReference>
<dbReference type="GO" id="GO:0005615">
    <property type="term" value="C:extracellular space"/>
    <property type="evidence" value="ECO:0000314"/>
    <property type="project" value="UniProtKB"/>
</dbReference>
<dbReference type="GO" id="GO:0016020">
    <property type="term" value="C:membrane"/>
    <property type="evidence" value="ECO:0000314"/>
    <property type="project" value="UniProtKB"/>
</dbReference>
<dbReference type="GO" id="GO:0031091">
    <property type="term" value="C:platelet alpha granule"/>
    <property type="evidence" value="ECO:0000314"/>
    <property type="project" value="UniProtKB"/>
</dbReference>
<dbReference type="GO" id="GO:0031094">
    <property type="term" value="C:platelet dense tubular network"/>
    <property type="evidence" value="ECO:0000314"/>
    <property type="project" value="UniProtKB"/>
</dbReference>
<dbReference type="GO" id="GO:0097181">
    <property type="term" value="C:protein C inhibitor-coagulation factor V complex"/>
    <property type="evidence" value="ECO:0000314"/>
    <property type="project" value="UniProtKB"/>
</dbReference>
<dbReference type="GO" id="GO:0097182">
    <property type="term" value="C:protein C inhibitor-coagulation factor Xa complex"/>
    <property type="evidence" value="ECO:0000314"/>
    <property type="project" value="UniProtKB"/>
</dbReference>
<dbReference type="GO" id="GO:0097183">
    <property type="term" value="C:protein C inhibitor-coagulation factor XI complex"/>
    <property type="evidence" value="ECO:0000314"/>
    <property type="project" value="UniProtKB"/>
</dbReference>
<dbReference type="GO" id="GO:0036029">
    <property type="term" value="C:protein C inhibitor-KLK3 complex"/>
    <property type="evidence" value="ECO:0000314"/>
    <property type="project" value="UniProtKB"/>
</dbReference>
<dbReference type="GO" id="GO:0036030">
    <property type="term" value="C:protein C inhibitor-plasma kallikrein complex"/>
    <property type="evidence" value="ECO:0000314"/>
    <property type="project" value="UniProtKB"/>
</dbReference>
<dbReference type="GO" id="GO:0036026">
    <property type="term" value="C:protein C inhibitor-PLAT complex"/>
    <property type="evidence" value="ECO:0000314"/>
    <property type="project" value="UniProtKB"/>
</dbReference>
<dbReference type="GO" id="GO:0036027">
    <property type="term" value="C:protein C inhibitor-PLAU complex"/>
    <property type="evidence" value="ECO:0000314"/>
    <property type="project" value="UniProtKB"/>
</dbReference>
<dbReference type="GO" id="GO:0036028">
    <property type="term" value="C:protein C inhibitor-thrombin complex"/>
    <property type="evidence" value="ECO:0000314"/>
    <property type="project" value="UniProtKB"/>
</dbReference>
<dbReference type="GO" id="GO:0036025">
    <property type="term" value="C:protein C inhibitor-TMPRSS11E complex"/>
    <property type="evidence" value="ECO:0000314"/>
    <property type="project" value="UniProtKB"/>
</dbReference>
<dbReference type="GO" id="GO:0036024">
    <property type="term" value="C:protein C inhibitor-TMPRSS7 complex"/>
    <property type="evidence" value="ECO:0000314"/>
    <property type="project" value="UniProtKB"/>
</dbReference>
<dbReference type="GO" id="GO:0032991">
    <property type="term" value="C:protein-containing complex"/>
    <property type="evidence" value="ECO:0000314"/>
    <property type="project" value="UniProtKB"/>
</dbReference>
<dbReference type="GO" id="GO:0032190">
    <property type="term" value="F:acrosin binding"/>
    <property type="evidence" value="ECO:0000353"/>
    <property type="project" value="UniProtKB"/>
</dbReference>
<dbReference type="GO" id="GO:0005539">
    <property type="term" value="F:glycosaminoglycan binding"/>
    <property type="evidence" value="ECO:0000304"/>
    <property type="project" value="UniProtKB"/>
</dbReference>
<dbReference type="GO" id="GO:0008201">
    <property type="term" value="F:heparin binding"/>
    <property type="evidence" value="ECO:0000304"/>
    <property type="project" value="UniProtKB"/>
</dbReference>
<dbReference type="GO" id="GO:0031210">
    <property type="term" value="F:phosphatidylcholine binding"/>
    <property type="evidence" value="ECO:0000314"/>
    <property type="project" value="UniProtKB"/>
</dbReference>
<dbReference type="GO" id="GO:0002020">
    <property type="term" value="F:protease binding"/>
    <property type="evidence" value="ECO:0000353"/>
    <property type="project" value="UniProtKB"/>
</dbReference>
<dbReference type="GO" id="GO:0001972">
    <property type="term" value="F:retinoic acid binding"/>
    <property type="evidence" value="ECO:0000314"/>
    <property type="project" value="UniProtKB"/>
</dbReference>
<dbReference type="GO" id="GO:0004867">
    <property type="term" value="F:serine-type endopeptidase inhibitor activity"/>
    <property type="evidence" value="ECO:0000314"/>
    <property type="project" value="UniProtKB"/>
</dbReference>
<dbReference type="GO" id="GO:0007342">
    <property type="term" value="P:fusion of sperm to egg plasma membrane involved in single fertilization"/>
    <property type="evidence" value="ECO:0000303"/>
    <property type="project" value="UniProtKB"/>
</dbReference>
<dbReference type="GO" id="GO:0006869">
    <property type="term" value="P:lipid transport"/>
    <property type="evidence" value="ECO:0007669"/>
    <property type="project" value="UniProtKB-KW"/>
</dbReference>
<dbReference type="GO" id="GO:0051346">
    <property type="term" value="P:negative regulation of hydrolase activity"/>
    <property type="evidence" value="ECO:0000315"/>
    <property type="project" value="UniProtKB"/>
</dbReference>
<dbReference type="GO" id="GO:0007283">
    <property type="term" value="P:spermatogenesis"/>
    <property type="evidence" value="ECO:0000250"/>
    <property type="project" value="UniProtKB"/>
</dbReference>
<dbReference type="CDD" id="cd19553">
    <property type="entry name" value="serpinA5_PCI"/>
    <property type="match status" value="1"/>
</dbReference>
<dbReference type="FunFam" id="3.30.497.10:FF:000001">
    <property type="entry name" value="Serine protease inhibitor"/>
    <property type="match status" value="1"/>
</dbReference>
<dbReference type="FunFam" id="2.30.39.10:FF:000065">
    <property type="entry name" value="Serpin family A member 5"/>
    <property type="match status" value="1"/>
</dbReference>
<dbReference type="Gene3D" id="2.30.39.10">
    <property type="entry name" value="Alpha-1-antitrypsin, domain 1"/>
    <property type="match status" value="1"/>
</dbReference>
<dbReference type="Gene3D" id="3.30.497.10">
    <property type="entry name" value="Antithrombin, subunit I, domain 2"/>
    <property type="match status" value="1"/>
</dbReference>
<dbReference type="InterPro" id="IPR023795">
    <property type="entry name" value="Serpin_CS"/>
</dbReference>
<dbReference type="InterPro" id="IPR023796">
    <property type="entry name" value="Serpin_dom"/>
</dbReference>
<dbReference type="InterPro" id="IPR000215">
    <property type="entry name" value="Serpin_fam"/>
</dbReference>
<dbReference type="InterPro" id="IPR036186">
    <property type="entry name" value="Serpin_sf"/>
</dbReference>
<dbReference type="InterPro" id="IPR042178">
    <property type="entry name" value="Serpin_sf_1"/>
</dbReference>
<dbReference type="InterPro" id="IPR042185">
    <property type="entry name" value="Serpin_sf_2"/>
</dbReference>
<dbReference type="PANTHER" id="PTHR11461:SF274">
    <property type="entry name" value="PLASMA SERINE PROTEASE INHIBITOR"/>
    <property type="match status" value="1"/>
</dbReference>
<dbReference type="PANTHER" id="PTHR11461">
    <property type="entry name" value="SERINE PROTEASE INHIBITOR, SERPIN"/>
    <property type="match status" value="1"/>
</dbReference>
<dbReference type="Pfam" id="PF00079">
    <property type="entry name" value="Serpin"/>
    <property type="match status" value="1"/>
</dbReference>
<dbReference type="SMART" id="SM00093">
    <property type="entry name" value="SERPIN"/>
    <property type="match status" value="1"/>
</dbReference>
<dbReference type="SUPFAM" id="SSF56574">
    <property type="entry name" value="Serpins"/>
    <property type="match status" value="1"/>
</dbReference>
<dbReference type="PROSITE" id="PS00284">
    <property type="entry name" value="SERPIN"/>
    <property type="match status" value="1"/>
</dbReference>
<sequence>MQLFLLLCLVLLSPQGASLHRHHPREMKKRVEDLHVGATVAPSSRRDFTFDLYRALASAAPSQSIFFSPVSISMSLAMLSLGAGSSTKMQILEGLGLNLQKSSEKELHRGFQQLLQELNQPRDGFQLSLGNALFTDLVVDLQDTFVSAMKTLYLADTFPTNFRDSAGAMKQINDYVAKQTKGKIVDLLKNLDSNAVVIMVNYIFFKAKWETSFNHKGTQEQDFYVTSETVVRVPMMSREDQYHYLLDRNLSCRVVGVPYQGNATALFILPSEGKMQQVENGLSEKTLRKWLKMFKKRQLELYLPKFSIEGSYQLEKVLPSLGISNVFTSHADLSGISNHSNIQVSEMVHKAVVEVDESGTRAAAATGTIFTFRSARLNSQRLVFNRPFLMFIVDNNILFLGKVNRP</sequence>
<evidence type="ECO:0000269" key="1">
    <source>
    </source>
</evidence>
<evidence type="ECO:0000269" key="2">
    <source>
    </source>
</evidence>
<evidence type="ECO:0000269" key="3">
    <source>
    </source>
</evidence>
<evidence type="ECO:0000269" key="4">
    <source>
    </source>
</evidence>
<evidence type="ECO:0000269" key="5">
    <source>
    </source>
</evidence>
<evidence type="ECO:0000269" key="6">
    <source>
    </source>
</evidence>
<evidence type="ECO:0000269" key="7">
    <source>
    </source>
</evidence>
<evidence type="ECO:0000269" key="8">
    <source>
    </source>
</evidence>
<evidence type="ECO:0000269" key="9">
    <source>
    </source>
</evidence>
<evidence type="ECO:0000269" key="10">
    <source>
    </source>
</evidence>
<evidence type="ECO:0000269" key="11">
    <source>
    </source>
</evidence>
<evidence type="ECO:0000269" key="12">
    <source>
    </source>
</evidence>
<evidence type="ECO:0000269" key="13">
    <source>
    </source>
</evidence>
<evidence type="ECO:0000269" key="14">
    <source>
    </source>
</evidence>
<evidence type="ECO:0000269" key="15">
    <source>
    </source>
</evidence>
<evidence type="ECO:0000269" key="16">
    <source>
    </source>
</evidence>
<evidence type="ECO:0000269" key="17">
    <source>
    </source>
</evidence>
<evidence type="ECO:0000269" key="18">
    <source>
    </source>
</evidence>
<evidence type="ECO:0000269" key="19">
    <source>
    </source>
</evidence>
<evidence type="ECO:0000269" key="20">
    <source>
    </source>
</evidence>
<evidence type="ECO:0000269" key="21">
    <source>
    </source>
</evidence>
<evidence type="ECO:0000269" key="22">
    <source>
    </source>
</evidence>
<evidence type="ECO:0000269" key="23">
    <source>
    </source>
</evidence>
<evidence type="ECO:0000269" key="24">
    <source>
    </source>
</evidence>
<evidence type="ECO:0000269" key="25">
    <source>
    </source>
</evidence>
<evidence type="ECO:0000269" key="26">
    <source>
    </source>
</evidence>
<evidence type="ECO:0000269" key="27">
    <source>
    </source>
</evidence>
<evidence type="ECO:0000269" key="28">
    <source>
    </source>
</evidence>
<evidence type="ECO:0000269" key="29">
    <source>
    </source>
</evidence>
<evidence type="ECO:0000269" key="30">
    <source>
    </source>
</evidence>
<evidence type="ECO:0000269" key="31">
    <source>
    </source>
</evidence>
<evidence type="ECO:0000269" key="32">
    <source>
    </source>
</evidence>
<evidence type="ECO:0000269" key="33">
    <source>
    </source>
</evidence>
<evidence type="ECO:0000269" key="34">
    <source>
    </source>
</evidence>
<evidence type="ECO:0000269" key="35">
    <source>
    </source>
</evidence>
<evidence type="ECO:0000269" key="36">
    <source>
    </source>
</evidence>
<evidence type="ECO:0000269" key="37">
    <source ref="6"/>
</evidence>
<evidence type="ECO:0000305" key="38"/>
<evidence type="ECO:0007829" key="39">
    <source>
        <dbReference type="PDB" id="1LQ8"/>
    </source>
</evidence>
<evidence type="ECO:0007829" key="40">
    <source>
        <dbReference type="PDB" id="2OL2"/>
    </source>
</evidence>
<evidence type="ECO:0007829" key="41">
    <source>
        <dbReference type="PDB" id="3DY0"/>
    </source>
</evidence>
<organism>
    <name type="scientific">Homo sapiens</name>
    <name type="common">Human</name>
    <dbReference type="NCBI Taxonomy" id="9606"/>
    <lineage>
        <taxon>Eukaryota</taxon>
        <taxon>Metazoa</taxon>
        <taxon>Chordata</taxon>
        <taxon>Craniata</taxon>
        <taxon>Vertebrata</taxon>
        <taxon>Euteleostomi</taxon>
        <taxon>Mammalia</taxon>
        <taxon>Eutheria</taxon>
        <taxon>Euarchontoglires</taxon>
        <taxon>Primates</taxon>
        <taxon>Haplorrhini</taxon>
        <taxon>Catarrhini</taxon>
        <taxon>Hominidae</taxon>
        <taxon>Homo</taxon>
    </lineage>
</organism>